<comment type="function">
    <text evidence="1">NDH-1 shuttles electrons from NADH, via FMN and iron-sulfur (Fe-S) centers, to quinones in the respiratory chain. The immediate electron acceptor for the enzyme in this species is believed to be ubiquinone. Couples the redox reaction to proton translocation (for every two electrons transferred, four hydrogen ions are translocated across the cytoplasmic membrane), and thus conserves the redox energy in a proton gradient. This subunit may bind ubiquinone.</text>
</comment>
<comment type="catalytic activity">
    <reaction evidence="1">
        <text>a quinone + NADH + 5 H(+)(in) = a quinol + NAD(+) + 4 H(+)(out)</text>
        <dbReference type="Rhea" id="RHEA:57888"/>
        <dbReference type="ChEBI" id="CHEBI:15378"/>
        <dbReference type="ChEBI" id="CHEBI:24646"/>
        <dbReference type="ChEBI" id="CHEBI:57540"/>
        <dbReference type="ChEBI" id="CHEBI:57945"/>
        <dbReference type="ChEBI" id="CHEBI:132124"/>
    </reaction>
</comment>
<comment type="subunit">
    <text evidence="1">NDH-1 is composed of 14 different subunits. Subunits NuoA, H, J, K, L, M, N constitute the membrane sector of the complex.</text>
</comment>
<comment type="subcellular location">
    <subcellularLocation>
        <location evidence="1">Cell inner membrane</location>
        <topology evidence="1">Multi-pass membrane protein</topology>
    </subcellularLocation>
</comment>
<comment type="similarity">
    <text evidence="1">Belongs to the complex I subunit 1 family.</text>
</comment>
<protein>
    <recommendedName>
        <fullName evidence="1">NADH-quinone oxidoreductase subunit H</fullName>
        <ecNumber evidence="1">7.1.1.-</ecNumber>
    </recommendedName>
    <alternativeName>
        <fullName evidence="1">NADH dehydrogenase I subunit H</fullName>
    </alternativeName>
    <alternativeName>
        <fullName evidence="1">NDH-1 subunit H</fullName>
    </alternativeName>
</protein>
<proteinExistence type="inferred from homology"/>
<reference key="1">
    <citation type="journal article" date="2007" name="Curr. Biol.">
        <title>Reduced genome of the thioautotrophic intracellular symbiont in a deep-sea clam, Calyptogena okutanii.</title>
        <authorList>
            <person name="Kuwahara H."/>
            <person name="Yoshida T."/>
            <person name="Takaki Y."/>
            <person name="Shimamura S."/>
            <person name="Nishi S."/>
            <person name="Harada M."/>
            <person name="Matsuyama K."/>
            <person name="Takishita K."/>
            <person name="Kawato M."/>
            <person name="Uematsu K."/>
            <person name="Fujiwara Y."/>
            <person name="Sato T."/>
            <person name="Kato C."/>
            <person name="Kitagawa M."/>
            <person name="Kato I."/>
            <person name="Maruyama T."/>
        </authorList>
    </citation>
    <scope>NUCLEOTIDE SEQUENCE [LARGE SCALE GENOMIC DNA]</scope>
    <source>
        <strain>HA</strain>
    </source>
</reference>
<organism>
    <name type="scientific">Vesicomyosocius okutanii subsp. Calyptogena okutanii (strain HA)</name>
    <dbReference type="NCBI Taxonomy" id="412965"/>
    <lineage>
        <taxon>Bacteria</taxon>
        <taxon>Pseudomonadati</taxon>
        <taxon>Pseudomonadota</taxon>
        <taxon>Gammaproteobacteria</taxon>
        <taxon>Candidatus Pseudothioglobaceae</taxon>
        <taxon>Candidatus Vesicomyosocius</taxon>
    </lineage>
</organism>
<gene>
    <name evidence="1" type="primary">nuoH</name>
    <name type="ordered locus">COSY_0236</name>
</gene>
<sequence length="357" mass="40310">MELWQTFVKMVHALVPWLDGTVAIILIIFIKAIALLIPLMLVVAYFTYAERKVIGYMQLRIGPNRVGPKGWLQPIADALKLMTKEIIFPTKANIYLFLLAPVLAIAPAIAVWAVIPFDESIYITNLDISLLYVLAIGSIGVYGIILAGWASNSKYPLLGALRSAALLVSYEIVIGFALVTVVMIAGSVNLNTIVQAQQGGIIYWYFIPLFPIMIIFFISSLVETNRAPFDVVEGESEIVGGTHVEYSGMTFAVFFLAEYANMILMAVLSVIMFFGGWHSPFEAIPYLESVFSWIPGMIWLLAKTTFFMFLYLWVRATFPRFRYDQIMHLSWKVFLPITIIWIFVVALMTQLQLSPWF</sequence>
<accession>A5CXG4</accession>
<dbReference type="EC" id="7.1.1.-" evidence="1"/>
<dbReference type="EMBL" id="AP009247">
    <property type="protein sequence ID" value="BAF61366.1"/>
    <property type="molecule type" value="Genomic_DNA"/>
</dbReference>
<dbReference type="RefSeq" id="WP_011929636.1">
    <property type="nucleotide sequence ID" value="NC_009465.1"/>
</dbReference>
<dbReference type="SMR" id="A5CXG4"/>
<dbReference type="STRING" id="412965.COSY_0236"/>
<dbReference type="KEGG" id="vok:COSY_0236"/>
<dbReference type="eggNOG" id="COG1005">
    <property type="taxonomic scope" value="Bacteria"/>
</dbReference>
<dbReference type="HOGENOM" id="CLU_015134_0_1_6"/>
<dbReference type="OrthoDB" id="9803734at2"/>
<dbReference type="Proteomes" id="UP000000247">
    <property type="component" value="Chromosome"/>
</dbReference>
<dbReference type="GO" id="GO:0005886">
    <property type="term" value="C:plasma membrane"/>
    <property type="evidence" value="ECO:0007669"/>
    <property type="project" value="UniProtKB-SubCell"/>
</dbReference>
<dbReference type="GO" id="GO:0003954">
    <property type="term" value="F:NADH dehydrogenase activity"/>
    <property type="evidence" value="ECO:0007669"/>
    <property type="project" value="TreeGrafter"/>
</dbReference>
<dbReference type="GO" id="GO:0016655">
    <property type="term" value="F:oxidoreductase activity, acting on NAD(P)H, quinone or similar compound as acceptor"/>
    <property type="evidence" value="ECO:0007669"/>
    <property type="project" value="UniProtKB-UniRule"/>
</dbReference>
<dbReference type="GO" id="GO:0048038">
    <property type="term" value="F:quinone binding"/>
    <property type="evidence" value="ECO:0007669"/>
    <property type="project" value="UniProtKB-KW"/>
</dbReference>
<dbReference type="GO" id="GO:0009060">
    <property type="term" value="P:aerobic respiration"/>
    <property type="evidence" value="ECO:0007669"/>
    <property type="project" value="TreeGrafter"/>
</dbReference>
<dbReference type="HAMAP" id="MF_01350">
    <property type="entry name" value="NDH1_NuoH"/>
    <property type="match status" value="1"/>
</dbReference>
<dbReference type="InterPro" id="IPR001694">
    <property type="entry name" value="NADH_UbQ_OxRdtase_su1/FPO"/>
</dbReference>
<dbReference type="InterPro" id="IPR018086">
    <property type="entry name" value="NADH_UbQ_OxRdtase_su1_CS"/>
</dbReference>
<dbReference type="NCBIfam" id="NF004741">
    <property type="entry name" value="PRK06076.1-2"/>
    <property type="match status" value="1"/>
</dbReference>
<dbReference type="PANTHER" id="PTHR11432">
    <property type="entry name" value="NADH DEHYDROGENASE SUBUNIT 1"/>
    <property type="match status" value="1"/>
</dbReference>
<dbReference type="PANTHER" id="PTHR11432:SF3">
    <property type="entry name" value="NADH-UBIQUINONE OXIDOREDUCTASE CHAIN 1"/>
    <property type="match status" value="1"/>
</dbReference>
<dbReference type="Pfam" id="PF00146">
    <property type="entry name" value="NADHdh"/>
    <property type="match status" value="1"/>
</dbReference>
<dbReference type="PROSITE" id="PS00668">
    <property type="entry name" value="COMPLEX1_ND1_2"/>
    <property type="match status" value="1"/>
</dbReference>
<name>NUOH_VESOH</name>
<keyword id="KW-0997">Cell inner membrane</keyword>
<keyword id="KW-1003">Cell membrane</keyword>
<keyword id="KW-0472">Membrane</keyword>
<keyword id="KW-0520">NAD</keyword>
<keyword id="KW-0874">Quinone</keyword>
<keyword id="KW-1185">Reference proteome</keyword>
<keyword id="KW-1278">Translocase</keyword>
<keyword id="KW-0812">Transmembrane</keyword>
<keyword id="KW-1133">Transmembrane helix</keyword>
<keyword id="KW-0830">Ubiquinone</keyword>
<feature type="chain" id="PRO_0000298857" description="NADH-quinone oxidoreductase subunit H">
    <location>
        <begin position="1"/>
        <end position="357"/>
    </location>
</feature>
<feature type="transmembrane region" description="Helical" evidence="1">
    <location>
        <begin position="22"/>
        <end position="42"/>
    </location>
</feature>
<feature type="transmembrane region" description="Helical" evidence="1">
    <location>
        <begin position="94"/>
        <end position="114"/>
    </location>
</feature>
<feature type="transmembrane region" description="Helical" evidence="1">
    <location>
        <begin position="130"/>
        <end position="150"/>
    </location>
</feature>
<feature type="transmembrane region" description="Helical" evidence="1">
    <location>
        <begin position="164"/>
        <end position="184"/>
    </location>
</feature>
<feature type="transmembrane region" description="Helical" evidence="1">
    <location>
        <begin position="199"/>
        <end position="219"/>
    </location>
</feature>
<feature type="transmembrane region" description="Helical" evidence="1">
    <location>
        <begin position="254"/>
        <end position="274"/>
    </location>
</feature>
<feature type="transmembrane region" description="Helical" evidence="1">
    <location>
        <begin position="294"/>
        <end position="314"/>
    </location>
</feature>
<feature type="transmembrane region" description="Helical" evidence="1">
    <location>
        <begin position="333"/>
        <end position="353"/>
    </location>
</feature>
<evidence type="ECO:0000255" key="1">
    <source>
        <dbReference type="HAMAP-Rule" id="MF_01350"/>
    </source>
</evidence>